<name>APT_SHEB9</name>
<organism>
    <name type="scientific">Shewanella baltica (strain OS195)</name>
    <dbReference type="NCBI Taxonomy" id="399599"/>
    <lineage>
        <taxon>Bacteria</taxon>
        <taxon>Pseudomonadati</taxon>
        <taxon>Pseudomonadota</taxon>
        <taxon>Gammaproteobacteria</taxon>
        <taxon>Alteromonadales</taxon>
        <taxon>Shewanellaceae</taxon>
        <taxon>Shewanella</taxon>
    </lineage>
</organism>
<gene>
    <name evidence="1" type="primary">apt</name>
    <name type="ordered locus">Sbal195_2691</name>
</gene>
<sequence>MMAMNTETLSLIKQSIKTIPNYPKEGILFRDVTSLLENAAAYKATIDLLVEHYRGQGFTKIVGTEARGFLFGAPLALELGVGFVPVRKPGKLPRATISQSYELEYGHDSLEIHTDAINPNDKVLVVDDLLATGGTIEATVKLIRQLGGEVKHAAFVISLPDLGGEARLTALGLELVKLCEFEGE</sequence>
<protein>
    <recommendedName>
        <fullName evidence="1">Adenine phosphoribosyltransferase</fullName>
        <shortName evidence="1">APRT</shortName>
        <ecNumber evidence="1">2.4.2.7</ecNumber>
    </recommendedName>
</protein>
<evidence type="ECO:0000255" key="1">
    <source>
        <dbReference type="HAMAP-Rule" id="MF_00004"/>
    </source>
</evidence>
<comment type="function">
    <text evidence="1">Catalyzes a salvage reaction resulting in the formation of AMP, that is energically less costly than de novo synthesis.</text>
</comment>
<comment type="catalytic activity">
    <reaction evidence="1">
        <text>AMP + diphosphate = 5-phospho-alpha-D-ribose 1-diphosphate + adenine</text>
        <dbReference type="Rhea" id="RHEA:16609"/>
        <dbReference type="ChEBI" id="CHEBI:16708"/>
        <dbReference type="ChEBI" id="CHEBI:33019"/>
        <dbReference type="ChEBI" id="CHEBI:58017"/>
        <dbReference type="ChEBI" id="CHEBI:456215"/>
        <dbReference type="EC" id="2.4.2.7"/>
    </reaction>
</comment>
<comment type="pathway">
    <text evidence="1">Purine metabolism; AMP biosynthesis via salvage pathway; AMP from adenine: step 1/1.</text>
</comment>
<comment type="subunit">
    <text evidence="1">Homodimer.</text>
</comment>
<comment type="subcellular location">
    <subcellularLocation>
        <location evidence="1">Cytoplasm</location>
    </subcellularLocation>
</comment>
<comment type="similarity">
    <text evidence="1">Belongs to the purine/pyrimidine phosphoribosyltransferase family.</text>
</comment>
<feature type="chain" id="PRO_1000073804" description="Adenine phosphoribosyltransferase">
    <location>
        <begin position="1"/>
        <end position="184"/>
    </location>
</feature>
<accession>A9L5S5</accession>
<dbReference type="EC" id="2.4.2.7" evidence="1"/>
<dbReference type="EMBL" id="CP000891">
    <property type="protein sequence ID" value="ABX49859.1"/>
    <property type="molecule type" value="Genomic_DNA"/>
</dbReference>
<dbReference type="SMR" id="A9L5S5"/>
<dbReference type="KEGG" id="sbn:Sbal195_2691"/>
<dbReference type="HOGENOM" id="CLU_063339_3_0_6"/>
<dbReference type="UniPathway" id="UPA00588">
    <property type="reaction ID" value="UER00646"/>
</dbReference>
<dbReference type="Proteomes" id="UP000000770">
    <property type="component" value="Chromosome"/>
</dbReference>
<dbReference type="GO" id="GO:0005737">
    <property type="term" value="C:cytoplasm"/>
    <property type="evidence" value="ECO:0007669"/>
    <property type="project" value="UniProtKB-SubCell"/>
</dbReference>
<dbReference type="GO" id="GO:0002055">
    <property type="term" value="F:adenine binding"/>
    <property type="evidence" value="ECO:0007669"/>
    <property type="project" value="TreeGrafter"/>
</dbReference>
<dbReference type="GO" id="GO:0003999">
    <property type="term" value="F:adenine phosphoribosyltransferase activity"/>
    <property type="evidence" value="ECO:0007669"/>
    <property type="project" value="UniProtKB-UniRule"/>
</dbReference>
<dbReference type="GO" id="GO:0016208">
    <property type="term" value="F:AMP binding"/>
    <property type="evidence" value="ECO:0007669"/>
    <property type="project" value="TreeGrafter"/>
</dbReference>
<dbReference type="GO" id="GO:0006168">
    <property type="term" value="P:adenine salvage"/>
    <property type="evidence" value="ECO:0007669"/>
    <property type="project" value="InterPro"/>
</dbReference>
<dbReference type="GO" id="GO:0044209">
    <property type="term" value="P:AMP salvage"/>
    <property type="evidence" value="ECO:0007669"/>
    <property type="project" value="UniProtKB-UniRule"/>
</dbReference>
<dbReference type="GO" id="GO:0006166">
    <property type="term" value="P:purine ribonucleoside salvage"/>
    <property type="evidence" value="ECO:0007669"/>
    <property type="project" value="UniProtKB-KW"/>
</dbReference>
<dbReference type="CDD" id="cd06223">
    <property type="entry name" value="PRTases_typeI"/>
    <property type="match status" value="1"/>
</dbReference>
<dbReference type="FunFam" id="3.40.50.2020:FF:000004">
    <property type="entry name" value="Adenine phosphoribosyltransferase"/>
    <property type="match status" value="1"/>
</dbReference>
<dbReference type="Gene3D" id="3.40.50.2020">
    <property type="match status" value="1"/>
</dbReference>
<dbReference type="HAMAP" id="MF_00004">
    <property type="entry name" value="Aden_phosphoribosyltr"/>
    <property type="match status" value="1"/>
</dbReference>
<dbReference type="InterPro" id="IPR005764">
    <property type="entry name" value="Ade_phspho_trans"/>
</dbReference>
<dbReference type="InterPro" id="IPR000836">
    <property type="entry name" value="PRibTrfase_dom"/>
</dbReference>
<dbReference type="InterPro" id="IPR029057">
    <property type="entry name" value="PRTase-like"/>
</dbReference>
<dbReference type="InterPro" id="IPR050054">
    <property type="entry name" value="UPRTase/APRTase"/>
</dbReference>
<dbReference type="NCBIfam" id="TIGR01090">
    <property type="entry name" value="apt"/>
    <property type="match status" value="1"/>
</dbReference>
<dbReference type="NCBIfam" id="NF002632">
    <property type="entry name" value="PRK02304.1-1"/>
    <property type="match status" value="1"/>
</dbReference>
<dbReference type="NCBIfam" id="NF002634">
    <property type="entry name" value="PRK02304.1-3"/>
    <property type="match status" value="1"/>
</dbReference>
<dbReference type="NCBIfam" id="NF002636">
    <property type="entry name" value="PRK02304.1-5"/>
    <property type="match status" value="1"/>
</dbReference>
<dbReference type="PANTHER" id="PTHR32315">
    <property type="entry name" value="ADENINE PHOSPHORIBOSYLTRANSFERASE"/>
    <property type="match status" value="1"/>
</dbReference>
<dbReference type="PANTHER" id="PTHR32315:SF3">
    <property type="entry name" value="ADENINE PHOSPHORIBOSYLTRANSFERASE"/>
    <property type="match status" value="1"/>
</dbReference>
<dbReference type="Pfam" id="PF00156">
    <property type="entry name" value="Pribosyltran"/>
    <property type="match status" value="1"/>
</dbReference>
<dbReference type="SUPFAM" id="SSF53271">
    <property type="entry name" value="PRTase-like"/>
    <property type="match status" value="1"/>
</dbReference>
<dbReference type="PROSITE" id="PS00103">
    <property type="entry name" value="PUR_PYR_PR_TRANSFER"/>
    <property type="match status" value="1"/>
</dbReference>
<keyword id="KW-0963">Cytoplasm</keyword>
<keyword id="KW-0328">Glycosyltransferase</keyword>
<keyword id="KW-0660">Purine salvage</keyword>
<keyword id="KW-0808">Transferase</keyword>
<reference key="1">
    <citation type="submission" date="2007-11" db="EMBL/GenBank/DDBJ databases">
        <title>Complete sequence of chromosome of Shewanella baltica OS195.</title>
        <authorList>
            <consortium name="US DOE Joint Genome Institute"/>
            <person name="Copeland A."/>
            <person name="Lucas S."/>
            <person name="Lapidus A."/>
            <person name="Barry K."/>
            <person name="Glavina del Rio T."/>
            <person name="Dalin E."/>
            <person name="Tice H."/>
            <person name="Pitluck S."/>
            <person name="Chain P."/>
            <person name="Malfatti S."/>
            <person name="Shin M."/>
            <person name="Vergez L."/>
            <person name="Schmutz J."/>
            <person name="Larimer F."/>
            <person name="Land M."/>
            <person name="Hauser L."/>
            <person name="Kyrpides N."/>
            <person name="Kim E."/>
            <person name="Brettar I."/>
            <person name="Rodrigues J."/>
            <person name="Konstantinidis K."/>
            <person name="Klappenbach J."/>
            <person name="Hofle M."/>
            <person name="Tiedje J."/>
            <person name="Richardson P."/>
        </authorList>
    </citation>
    <scope>NUCLEOTIDE SEQUENCE [LARGE SCALE GENOMIC DNA]</scope>
    <source>
        <strain>OS195</strain>
    </source>
</reference>
<proteinExistence type="inferred from homology"/>